<gene>
    <name type="ordered locus">BAB1_0368</name>
</gene>
<organism>
    <name type="scientific">Brucella abortus (strain 2308)</name>
    <dbReference type="NCBI Taxonomy" id="359391"/>
    <lineage>
        <taxon>Bacteria</taxon>
        <taxon>Pseudomonadati</taxon>
        <taxon>Pseudomonadota</taxon>
        <taxon>Alphaproteobacteria</taxon>
        <taxon>Hyphomicrobiales</taxon>
        <taxon>Brucellaceae</taxon>
        <taxon>Brucella/Ochrobactrum group</taxon>
        <taxon>Brucella</taxon>
    </lineage>
</organism>
<protein>
    <recommendedName>
        <fullName>Invasion protein B homolog BAB1_0368</fullName>
    </recommendedName>
</protein>
<sequence length="173" mass="18039">MKNYRAIGLAFTFTALSSLSAFAASLPGGASTLQETYQDWTVSCQSQKDTTACVMRQEQSSAQTGQRVLTAELRNVAGGKVDGVLLMPFGLDLAKGASLKIDDTAGPNLTFSTCLPQGCLAPVSFDAKQVAALKSGTNINVTTTALSPSQPVAFKISLKGFGAALDRIQALTK</sequence>
<accession>Q2YPK5</accession>
<feature type="signal peptide" evidence="1">
    <location>
        <begin position="1"/>
        <end position="23"/>
    </location>
</feature>
<feature type="chain" id="PRO_0000284473" description="Invasion protein B homolog BAB1_0368">
    <location>
        <begin position="24"/>
        <end position="173"/>
    </location>
</feature>
<comment type="similarity">
    <text evidence="2">Belongs to the IalB family.</text>
</comment>
<keyword id="KW-1185">Reference proteome</keyword>
<keyword id="KW-0732">Signal</keyword>
<reference key="1">
    <citation type="journal article" date="2005" name="Infect. Immun.">
        <title>Whole-genome analyses of speciation events in pathogenic Brucellae.</title>
        <authorList>
            <person name="Chain P.S."/>
            <person name="Comerci D.J."/>
            <person name="Tolmasky M.E."/>
            <person name="Larimer F.W."/>
            <person name="Malfatti S.A."/>
            <person name="Vergez L.M."/>
            <person name="Aguero F."/>
            <person name="Land M.L."/>
            <person name="Ugalde R.A."/>
            <person name="Garcia E."/>
        </authorList>
    </citation>
    <scope>NUCLEOTIDE SEQUENCE [LARGE SCALE GENOMIC DNA]</scope>
    <source>
        <strain>2308</strain>
    </source>
</reference>
<evidence type="ECO:0000255" key="1"/>
<evidence type="ECO:0000305" key="2"/>
<proteinExistence type="inferred from homology"/>
<dbReference type="EMBL" id="AM040264">
    <property type="protein sequence ID" value="CAJ10324.1"/>
    <property type="molecule type" value="Genomic_DNA"/>
</dbReference>
<dbReference type="RefSeq" id="WP_002963504.1">
    <property type="nucleotide sequence ID" value="NZ_KN046823.1"/>
</dbReference>
<dbReference type="SMR" id="Q2YPK5"/>
<dbReference type="STRING" id="359391.BAB1_0368"/>
<dbReference type="KEGG" id="bmf:BAB1_0368"/>
<dbReference type="PATRIC" id="fig|359391.11.peg.2414"/>
<dbReference type="HOGENOM" id="CLU_096085_3_0_5"/>
<dbReference type="PhylomeDB" id="Q2YPK5"/>
<dbReference type="Proteomes" id="UP000002719">
    <property type="component" value="Chromosome I"/>
</dbReference>
<dbReference type="Gene3D" id="2.60.40.1880">
    <property type="entry name" value="Invasion associated locus B (IalB) protein"/>
    <property type="match status" value="1"/>
</dbReference>
<dbReference type="InterPro" id="IPR038696">
    <property type="entry name" value="IalB_sf"/>
</dbReference>
<dbReference type="InterPro" id="IPR010642">
    <property type="entry name" value="Invasion_prot_B"/>
</dbReference>
<dbReference type="Pfam" id="PF06776">
    <property type="entry name" value="IalB"/>
    <property type="match status" value="1"/>
</dbReference>
<name>Y368_BRUA2</name>